<evidence type="ECO:0000255" key="1">
    <source>
        <dbReference type="HAMAP-Rule" id="MF_00810"/>
    </source>
</evidence>
<evidence type="ECO:0000256" key="2">
    <source>
        <dbReference type="SAM" id="MobiDB-lite"/>
    </source>
</evidence>
<evidence type="ECO:0000305" key="3"/>
<gene>
    <name evidence="1" type="primary">rpl32e</name>
    <name type="ordered locus">TGAM_1985</name>
</gene>
<dbReference type="EMBL" id="CP001398">
    <property type="protein sequence ID" value="ACS34487.1"/>
    <property type="molecule type" value="Genomic_DNA"/>
</dbReference>
<dbReference type="RefSeq" id="WP_015859591.1">
    <property type="nucleotide sequence ID" value="NC_012804.1"/>
</dbReference>
<dbReference type="SMR" id="C5A268"/>
<dbReference type="STRING" id="593117.TGAM_1985"/>
<dbReference type="PaxDb" id="593117-TGAM_1985"/>
<dbReference type="GeneID" id="7987042"/>
<dbReference type="KEGG" id="tga:TGAM_1985"/>
<dbReference type="PATRIC" id="fig|593117.10.peg.1995"/>
<dbReference type="eggNOG" id="arCOG00781">
    <property type="taxonomic scope" value="Archaea"/>
</dbReference>
<dbReference type="HOGENOM" id="CLU_071479_3_1_2"/>
<dbReference type="OrthoDB" id="372100at2157"/>
<dbReference type="Proteomes" id="UP000001488">
    <property type="component" value="Chromosome"/>
</dbReference>
<dbReference type="GO" id="GO:0022625">
    <property type="term" value="C:cytosolic large ribosomal subunit"/>
    <property type="evidence" value="ECO:0007669"/>
    <property type="project" value="TreeGrafter"/>
</dbReference>
<dbReference type="GO" id="GO:0003735">
    <property type="term" value="F:structural constituent of ribosome"/>
    <property type="evidence" value="ECO:0007669"/>
    <property type="project" value="InterPro"/>
</dbReference>
<dbReference type="GO" id="GO:0006412">
    <property type="term" value="P:translation"/>
    <property type="evidence" value="ECO:0007669"/>
    <property type="project" value="UniProtKB-UniRule"/>
</dbReference>
<dbReference type="CDD" id="cd00513">
    <property type="entry name" value="Ribosomal_L32_L32e"/>
    <property type="match status" value="1"/>
</dbReference>
<dbReference type="HAMAP" id="MF_00810">
    <property type="entry name" value="Ribosomal_eL32"/>
    <property type="match status" value="1"/>
</dbReference>
<dbReference type="InterPro" id="IPR001515">
    <property type="entry name" value="Ribosomal_eL32"/>
</dbReference>
<dbReference type="InterPro" id="IPR023654">
    <property type="entry name" value="Ribosomal_eL32_arc"/>
</dbReference>
<dbReference type="InterPro" id="IPR018263">
    <property type="entry name" value="Ribosomal_eL32_CS"/>
</dbReference>
<dbReference type="InterPro" id="IPR036351">
    <property type="entry name" value="Ribosomal_eL32_sf"/>
</dbReference>
<dbReference type="NCBIfam" id="NF006332">
    <property type="entry name" value="PRK08562.1"/>
    <property type="match status" value="1"/>
</dbReference>
<dbReference type="PANTHER" id="PTHR23413">
    <property type="entry name" value="60S RIBOSOMAL PROTEIN L32 AND DNA-DIRECTED RNA POLYMERASE II, SUBUNIT N"/>
    <property type="match status" value="1"/>
</dbReference>
<dbReference type="PANTHER" id="PTHR23413:SF1">
    <property type="entry name" value="RIBOSOMAL PROTEIN L32"/>
    <property type="match status" value="1"/>
</dbReference>
<dbReference type="Pfam" id="PF01655">
    <property type="entry name" value="Ribosomal_L32e"/>
    <property type="match status" value="1"/>
</dbReference>
<dbReference type="SMART" id="SM01393">
    <property type="entry name" value="Ribosomal_L32e"/>
    <property type="match status" value="1"/>
</dbReference>
<dbReference type="SUPFAM" id="SSF52042">
    <property type="entry name" value="Ribosomal protein L32e"/>
    <property type="match status" value="1"/>
</dbReference>
<dbReference type="PROSITE" id="PS00580">
    <property type="entry name" value="RIBOSOMAL_L32E"/>
    <property type="match status" value="1"/>
</dbReference>
<comment type="similarity">
    <text evidence="1">Belongs to the eukaryotic ribosomal protein eL32 family.</text>
</comment>
<name>RL32_THEGJ</name>
<reference key="1">
    <citation type="journal article" date="2007" name="Genome Biol.">
        <title>Genome analysis and genome-wide proteomics of Thermococcus gammatolerans, the most radioresistant organism known amongst the Archaea.</title>
        <authorList>
            <person name="Zivanovic Y."/>
            <person name="Armengaud J."/>
            <person name="Lagorce A."/>
            <person name="Leplat C."/>
            <person name="Guerin P."/>
            <person name="Dutertre M."/>
            <person name="Anthouard V."/>
            <person name="Forterre P."/>
            <person name="Wincker P."/>
            <person name="Confalonieri F."/>
        </authorList>
    </citation>
    <scope>NUCLEOTIDE SEQUENCE [LARGE SCALE GENOMIC DNA]</scope>
    <source>
        <strain>DSM 15229 / JCM 11827 / EJ3</strain>
    </source>
</reference>
<protein>
    <recommendedName>
        <fullName evidence="1">Large ribosomal subunit protein eL32</fullName>
    </recommendedName>
    <alternativeName>
        <fullName evidence="3">50S ribosomal protein L32e</fullName>
    </alternativeName>
</protein>
<proteinExistence type="inferred from homology"/>
<organism>
    <name type="scientific">Thermococcus gammatolerans (strain DSM 15229 / JCM 11827 / EJ3)</name>
    <dbReference type="NCBI Taxonomy" id="593117"/>
    <lineage>
        <taxon>Archaea</taxon>
        <taxon>Methanobacteriati</taxon>
        <taxon>Methanobacteriota</taxon>
        <taxon>Thermococci</taxon>
        <taxon>Thermococcales</taxon>
        <taxon>Thermococcaceae</taxon>
        <taxon>Thermococcus</taxon>
    </lineage>
</organism>
<accession>C5A268</accession>
<feature type="chain" id="PRO_1000213016" description="Large ribosomal subunit protein eL32">
    <location>
        <begin position="1"/>
        <end position="127"/>
    </location>
</feature>
<feature type="region of interest" description="Disordered" evidence="2">
    <location>
        <begin position="38"/>
        <end position="66"/>
    </location>
</feature>
<feature type="compositionally biased region" description="Basic and acidic residues" evidence="2">
    <location>
        <begin position="38"/>
        <end position="48"/>
    </location>
</feature>
<sequence length="127" mass="14896">MDEKARLLRVRARLKRKKPKFLRQEWWRFPKFKNDPKWRRPKGIDSKMRLKKKGKPRSPSIGWSSPRAVRGLHPSGYEEVLVHNVKELEAIDPTRQAARIARTVGARKREAIIARAKELGIKVLNAR</sequence>
<keyword id="KW-1185">Reference proteome</keyword>
<keyword id="KW-0687">Ribonucleoprotein</keyword>
<keyword id="KW-0689">Ribosomal protein</keyword>